<feature type="chain" id="PRO_1000090858" description="Cysteine--tRNA ligase">
    <location>
        <begin position="1"/>
        <end position="463"/>
    </location>
</feature>
<feature type="short sequence motif" description="'HIGH' region">
    <location>
        <begin position="30"/>
        <end position="40"/>
    </location>
</feature>
<feature type="short sequence motif" description="'KMSKS' region">
    <location>
        <begin position="266"/>
        <end position="270"/>
    </location>
</feature>
<feature type="binding site" evidence="1">
    <location>
        <position position="28"/>
    </location>
    <ligand>
        <name>Zn(2+)</name>
        <dbReference type="ChEBI" id="CHEBI:29105"/>
    </ligand>
</feature>
<feature type="binding site" evidence="1">
    <location>
        <position position="209"/>
    </location>
    <ligand>
        <name>Zn(2+)</name>
        <dbReference type="ChEBI" id="CHEBI:29105"/>
    </ligand>
</feature>
<feature type="binding site" evidence="1">
    <location>
        <position position="234"/>
    </location>
    <ligand>
        <name>Zn(2+)</name>
        <dbReference type="ChEBI" id="CHEBI:29105"/>
    </ligand>
</feature>
<feature type="binding site" evidence="1">
    <location>
        <position position="238"/>
    </location>
    <ligand>
        <name>Zn(2+)</name>
        <dbReference type="ChEBI" id="CHEBI:29105"/>
    </ligand>
</feature>
<feature type="binding site" evidence="1">
    <location>
        <position position="269"/>
    </location>
    <ligand>
        <name>ATP</name>
        <dbReference type="ChEBI" id="CHEBI:30616"/>
    </ligand>
</feature>
<sequence length="463" mass="52438">MLKIFNTLTRQKEEFKPIHKGKIGMYVCGITIYDLCHIGHGRTFVAFDAITRYLRYLGYDVNYVRNVTDVDDKIIKRAIENNETCEQLTTRMLAEMHKDFDALNILRPDSEPRATHHIAEIIALTETLIKRGHAYVAENGDVMFAIDTDPDYGLLSRQDLEQLQAGARVEVANVKRNPMDFVLWKMSKPGEPSWTSPWGEGRPGWHIECSAMNGKELGHHFDIHGGGSDLMFPHHENEIAQSTCAHDGPYVNYWMHSGMVMVDKEKMSKSLNNFFTIRDVLAYYDAETVRYFLLSGHYRSQLNYTEENLKQARTALERLYTSLRGTDANAQPAGGEAFEAQFIEAMNDDFNTPEAYSVLFDLAREVNRLKTVNMEAANGLAAVLRKLAKVLGLLEQQPEHFLQSGAQADDADEVEKIEALIQQRNDARKNKDWAAADAARDALTAMGIVLEDGPQGTTWRRNS</sequence>
<protein>
    <recommendedName>
        <fullName evidence="1">Cysteine--tRNA ligase</fullName>
        <ecNumber evidence="1">6.1.1.16</ecNumber>
    </recommendedName>
    <alternativeName>
        <fullName evidence="1">Cysteinyl-tRNA synthetase</fullName>
        <shortName evidence="1">CysRS</shortName>
    </alternativeName>
</protein>
<proteinExistence type="inferred from homology"/>
<keyword id="KW-0030">Aminoacyl-tRNA synthetase</keyword>
<keyword id="KW-0067">ATP-binding</keyword>
<keyword id="KW-0963">Cytoplasm</keyword>
<keyword id="KW-0436">Ligase</keyword>
<keyword id="KW-0479">Metal-binding</keyword>
<keyword id="KW-0547">Nucleotide-binding</keyword>
<keyword id="KW-0648">Protein biosynthesis</keyword>
<keyword id="KW-1185">Reference proteome</keyword>
<keyword id="KW-0862">Zinc</keyword>
<evidence type="ECO:0000255" key="1">
    <source>
        <dbReference type="HAMAP-Rule" id="MF_00041"/>
    </source>
</evidence>
<reference key="1">
    <citation type="journal article" date="2008" name="J. Bacteriol.">
        <title>Complete genome sequence of uropathogenic Proteus mirabilis, a master of both adherence and motility.</title>
        <authorList>
            <person name="Pearson M.M."/>
            <person name="Sebaihia M."/>
            <person name="Churcher C."/>
            <person name="Quail M.A."/>
            <person name="Seshasayee A.S."/>
            <person name="Luscombe N.M."/>
            <person name="Abdellah Z."/>
            <person name="Arrosmith C."/>
            <person name="Atkin B."/>
            <person name="Chillingworth T."/>
            <person name="Hauser H."/>
            <person name="Jagels K."/>
            <person name="Moule S."/>
            <person name="Mungall K."/>
            <person name="Norbertczak H."/>
            <person name="Rabbinowitsch E."/>
            <person name="Walker D."/>
            <person name="Whithead S."/>
            <person name="Thomson N.R."/>
            <person name="Rather P.N."/>
            <person name="Parkhill J."/>
            <person name="Mobley H.L.T."/>
        </authorList>
    </citation>
    <scope>NUCLEOTIDE SEQUENCE [LARGE SCALE GENOMIC DNA]</scope>
    <source>
        <strain>HI4320</strain>
    </source>
</reference>
<dbReference type="EC" id="6.1.1.16" evidence="1"/>
<dbReference type="EMBL" id="AM942759">
    <property type="protein sequence ID" value="CAR44297.1"/>
    <property type="molecule type" value="Genomic_DNA"/>
</dbReference>
<dbReference type="RefSeq" id="WP_004244247.1">
    <property type="nucleotide sequence ID" value="NC_010554.1"/>
</dbReference>
<dbReference type="SMR" id="B4F1M6"/>
<dbReference type="EnsemblBacteria" id="CAR44297">
    <property type="protein sequence ID" value="CAR44297"/>
    <property type="gene ID" value="PMI2158"/>
</dbReference>
<dbReference type="GeneID" id="6803407"/>
<dbReference type="KEGG" id="pmr:PMI2158"/>
<dbReference type="eggNOG" id="COG0215">
    <property type="taxonomic scope" value="Bacteria"/>
</dbReference>
<dbReference type="HOGENOM" id="CLU_013528_0_1_6"/>
<dbReference type="Proteomes" id="UP000008319">
    <property type="component" value="Chromosome"/>
</dbReference>
<dbReference type="GO" id="GO:0005829">
    <property type="term" value="C:cytosol"/>
    <property type="evidence" value="ECO:0007669"/>
    <property type="project" value="TreeGrafter"/>
</dbReference>
<dbReference type="GO" id="GO:0005524">
    <property type="term" value="F:ATP binding"/>
    <property type="evidence" value="ECO:0007669"/>
    <property type="project" value="UniProtKB-UniRule"/>
</dbReference>
<dbReference type="GO" id="GO:0004817">
    <property type="term" value="F:cysteine-tRNA ligase activity"/>
    <property type="evidence" value="ECO:0007669"/>
    <property type="project" value="UniProtKB-UniRule"/>
</dbReference>
<dbReference type="GO" id="GO:0008270">
    <property type="term" value="F:zinc ion binding"/>
    <property type="evidence" value="ECO:0007669"/>
    <property type="project" value="UniProtKB-UniRule"/>
</dbReference>
<dbReference type="GO" id="GO:0006423">
    <property type="term" value="P:cysteinyl-tRNA aminoacylation"/>
    <property type="evidence" value="ECO:0007669"/>
    <property type="project" value="UniProtKB-UniRule"/>
</dbReference>
<dbReference type="CDD" id="cd07963">
    <property type="entry name" value="Anticodon_Ia_Cys"/>
    <property type="match status" value="1"/>
</dbReference>
<dbReference type="CDD" id="cd00672">
    <property type="entry name" value="CysRS_core"/>
    <property type="match status" value="1"/>
</dbReference>
<dbReference type="FunFam" id="1.20.120.1910:FF:000001">
    <property type="entry name" value="Cysteine--tRNA ligase"/>
    <property type="match status" value="1"/>
</dbReference>
<dbReference type="FunFam" id="3.40.50.620:FF:000009">
    <property type="entry name" value="Cysteine--tRNA ligase"/>
    <property type="match status" value="1"/>
</dbReference>
<dbReference type="Gene3D" id="1.20.120.1910">
    <property type="entry name" value="Cysteine-tRNA ligase, C-terminal anti-codon recognition domain"/>
    <property type="match status" value="1"/>
</dbReference>
<dbReference type="Gene3D" id="3.40.50.620">
    <property type="entry name" value="HUPs"/>
    <property type="match status" value="1"/>
</dbReference>
<dbReference type="HAMAP" id="MF_00041">
    <property type="entry name" value="Cys_tRNA_synth"/>
    <property type="match status" value="1"/>
</dbReference>
<dbReference type="InterPro" id="IPR015803">
    <property type="entry name" value="Cys-tRNA-ligase"/>
</dbReference>
<dbReference type="InterPro" id="IPR015273">
    <property type="entry name" value="Cys-tRNA-synt_Ia_DALR"/>
</dbReference>
<dbReference type="InterPro" id="IPR024909">
    <property type="entry name" value="Cys-tRNA/MSH_ligase"/>
</dbReference>
<dbReference type="InterPro" id="IPR056411">
    <property type="entry name" value="CysS_C"/>
</dbReference>
<dbReference type="InterPro" id="IPR014729">
    <property type="entry name" value="Rossmann-like_a/b/a_fold"/>
</dbReference>
<dbReference type="InterPro" id="IPR032678">
    <property type="entry name" value="tRNA-synt_1_cat_dom"/>
</dbReference>
<dbReference type="InterPro" id="IPR009080">
    <property type="entry name" value="tRNAsynth_Ia_anticodon-bd"/>
</dbReference>
<dbReference type="NCBIfam" id="TIGR00435">
    <property type="entry name" value="cysS"/>
    <property type="match status" value="1"/>
</dbReference>
<dbReference type="PANTHER" id="PTHR10890:SF3">
    <property type="entry name" value="CYSTEINE--TRNA LIGASE, CYTOPLASMIC"/>
    <property type="match status" value="1"/>
</dbReference>
<dbReference type="PANTHER" id="PTHR10890">
    <property type="entry name" value="CYSTEINYL-TRNA SYNTHETASE"/>
    <property type="match status" value="1"/>
</dbReference>
<dbReference type="Pfam" id="PF23493">
    <property type="entry name" value="CysS_C"/>
    <property type="match status" value="1"/>
</dbReference>
<dbReference type="Pfam" id="PF09190">
    <property type="entry name" value="DALR_2"/>
    <property type="match status" value="1"/>
</dbReference>
<dbReference type="Pfam" id="PF01406">
    <property type="entry name" value="tRNA-synt_1e"/>
    <property type="match status" value="1"/>
</dbReference>
<dbReference type="PRINTS" id="PR00983">
    <property type="entry name" value="TRNASYNTHCYS"/>
</dbReference>
<dbReference type="SMART" id="SM00840">
    <property type="entry name" value="DALR_2"/>
    <property type="match status" value="1"/>
</dbReference>
<dbReference type="SUPFAM" id="SSF47323">
    <property type="entry name" value="Anticodon-binding domain of a subclass of class I aminoacyl-tRNA synthetases"/>
    <property type="match status" value="1"/>
</dbReference>
<dbReference type="SUPFAM" id="SSF52374">
    <property type="entry name" value="Nucleotidylyl transferase"/>
    <property type="match status" value="1"/>
</dbReference>
<gene>
    <name evidence="1" type="primary">cysS</name>
    <name type="ordered locus">PMI2158</name>
</gene>
<organism>
    <name type="scientific">Proteus mirabilis (strain HI4320)</name>
    <dbReference type="NCBI Taxonomy" id="529507"/>
    <lineage>
        <taxon>Bacteria</taxon>
        <taxon>Pseudomonadati</taxon>
        <taxon>Pseudomonadota</taxon>
        <taxon>Gammaproteobacteria</taxon>
        <taxon>Enterobacterales</taxon>
        <taxon>Morganellaceae</taxon>
        <taxon>Proteus</taxon>
    </lineage>
</organism>
<name>SYC_PROMH</name>
<comment type="catalytic activity">
    <reaction evidence="1">
        <text>tRNA(Cys) + L-cysteine + ATP = L-cysteinyl-tRNA(Cys) + AMP + diphosphate</text>
        <dbReference type="Rhea" id="RHEA:17773"/>
        <dbReference type="Rhea" id="RHEA-COMP:9661"/>
        <dbReference type="Rhea" id="RHEA-COMP:9679"/>
        <dbReference type="ChEBI" id="CHEBI:30616"/>
        <dbReference type="ChEBI" id="CHEBI:33019"/>
        <dbReference type="ChEBI" id="CHEBI:35235"/>
        <dbReference type="ChEBI" id="CHEBI:78442"/>
        <dbReference type="ChEBI" id="CHEBI:78517"/>
        <dbReference type="ChEBI" id="CHEBI:456215"/>
        <dbReference type="EC" id="6.1.1.16"/>
    </reaction>
</comment>
<comment type="cofactor">
    <cofactor evidence="1">
        <name>Zn(2+)</name>
        <dbReference type="ChEBI" id="CHEBI:29105"/>
    </cofactor>
    <text evidence="1">Binds 1 zinc ion per subunit.</text>
</comment>
<comment type="subunit">
    <text evidence="1">Monomer.</text>
</comment>
<comment type="subcellular location">
    <subcellularLocation>
        <location evidence="1">Cytoplasm</location>
    </subcellularLocation>
</comment>
<comment type="similarity">
    <text evidence="1">Belongs to the class-I aminoacyl-tRNA synthetase family.</text>
</comment>
<accession>B4F1M6</accession>